<sequence length="228" mass="25537">MKGSKSEVQGMVLTTGVKGLDELLGGGVARRVILQVYGPFATGKTTFAMQVGLLNEGKVAYVDTEGGFSPERLAQMARSRGLDPEKALSKFIIFEPMDLNEQRRVISKLKTIVDEKFSLVVVDSLTAHYRAEGSKNYGELAKQLQVLQWLARRKNVAVIVINQVYHDSNSNSLRPIAEHTLGYRTKDILRFEKLRVGVRLAVLERHRFRPEGGIVYFKITDKGLEDSK</sequence>
<organism>
    <name type="scientific">Pyrococcus horikoshii (strain ATCC 700860 / DSM 12428 / JCM 9974 / NBRC 100139 / OT-3)</name>
    <dbReference type="NCBI Taxonomy" id="70601"/>
    <lineage>
        <taxon>Archaea</taxon>
        <taxon>Methanobacteriati</taxon>
        <taxon>Methanobacteriota</taxon>
        <taxon>Thermococci</taxon>
        <taxon>Thermococcales</taxon>
        <taxon>Thermococcaceae</taxon>
        <taxon>Pyrococcus</taxon>
    </lineage>
</organism>
<feature type="chain" id="PRO_0000150118" description="DNA repair and recombination protein RadB">
    <location>
        <begin position="1"/>
        <end position="228"/>
    </location>
</feature>
<feature type="binding site" evidence="2">
    <location>
        <begin position="38"/>
        <end position="45"/>
    </location>
    <ligand>
        <name>ATP</name>
        <dbReference type="ChEBI" id="CHEBI:30616"/>
    </ligand>
</feature>
<comment type="function">
    <text evidence="1">Involved in DNA repair and in homologous recombination. May regulate the cleavage reactions of the branch-structured DNA. Has a very weak ATPase activity that is not stimulated by DNA. Binds DNA but does not promote DNA strands exchange (By similarity).</text>
</comment>
<comment type="similarity">
    <text evidence="3">Belongs to the eukaryotic RecA-like protein family. RadB subfamily.</text>
</comment>
<proteinExistence type="inferred from homology"/>
<keyword id="KW-0067">ATP-binding</keyword>
<keyword id="KW-0227">DNA damage</keyword>
<keyword id="KW-0233">DNA recombination</keyword>
<keyword id="KW-0238">DNA-binding</keyword>
<keyword id="KW-0547">Nucleotide-binding</keyword>
<dbReference type="EMBL" id="BA000001">
    <property type="protein sequence ID" value="BAA29188.1"/>
    <property type="molecule type" value="Genomic_DNA"/>
</dbReference>
<dbReference type="PIR" id="E71232">
    <property type="entry name" value="E71232"/>
</dbReference>
<dbReference type="RefSeq" id="WP_010884234.1">
    <property type="nucleotide sequence ID" value="NC_000961.1"/>
</dbReference>
<dbReference type="SMR" id="O57859"/>
<dbReference type="MINT" id="O57859"/>
<dbReference type="STRING" id="70601.gene:9377027"/>
<dbReference type="EnsemblBacteria" id="BAA29188">
    <property type="protein sequence ID" value="BAA29188"/>
    <property type="gene ID" value="BAA29188"/>
</dbReference>
<dbReference type="GeneID" id="1444016"/>
<dbReference type="KEGG" id="pho:PH0119"/>
<dbReference type="eggNOG" id="arCOG00417">
    <property type="taxonomic scope" value="Archaea"/>
</dbReference>
<dbReference type="OrthoDB" id="17644at2157"/>
<dbReference type="Proteomes" id="UP000000752">
    <property type="component" value="Chromosome"/>
</dbReference>
<dbReference type="GO" id="GO:0005524">
    <property type="term" value="F:ATP binding"/>
    <property type="evidence" value="ECO:0007669"/>
    <property type="project" value="UniProtKB-UniRule"/>
</dbReference>
<dbReference type="GO" id="GO:0016887">
    <property type="term" value="F:ATP hydrolysis activity"/>
    <property type="evidence" value="ECO:0007669"/>
    <property type="project" value="InterPro"/>
</dbReference>
<dbReference type="GO" id="GO:0140664">
    <property type="term" value="F:ATP-dependent DNA damage sensor activity"/>
    <property type="evidence" value="ECO:0007669"/>
    <property type="project" value="InterPro"/>
</dbReference>
<dbReference type="GO" id="GO:0003684">
    <property type="term" value="F:damaged DNA binding"/>
    <property type="evidence" value="ECO:0007669"/>
    <property type="project" value="UniProtKB-UniRule"/>
</dbReference>
<dbReference type="GO" id="GO:0006310">
    <property type="term" value="P:DNA recombination"/>
    <property type="evidence" value="ECO:0007669"/>
    <property type="project" value="UniProtKB-UniRule"/>
</dbReference>
<dbReference type="GO" id="GO:0006281">
    <property type="term" value="P:DNA repair"/>
    <property type="evidence" value="ECO:0007669"/>
    <property type="project" value="UniProtKB-UniRule"/>
</dbReference>
<dbReference type="Gene3D" id="3.40.50.300">
    <property type="entry name" value="P-loop containing nucleotide triphosphate hydrolases"/>
    <property type="match status" value="1"/>
</dbReference>
<dbReference type="HAMAP" id="MF_00350">
    <property type="entry name" value="RadB"/>
    <property type="match status" value="1"/>
</dbReference>
<dbReference type="InterPro" id="IPR003593">
    <property type="entry name" value="AAA+_ATPase"/>
</dbReference>
<dbReference type="InterPro" id="IPR013632">
    <property type="entry name" value="DNA_recomb/repair_Rad51_C"/>
</dbReference>
<dbReference type="InterPro" id="IPR011939">
    <property type="entry name" value="DNA_repair_and_recomb_RadB"/>
</dbReference>
<dbReference type="InterPro" id="IPR027417">
    <property type="entry name" value="P-loop_NTPase"/>
</dbReference>
<dbReference type="InterPro" id="IPR020588">
    <property type="entry name" value="RecA_ATP-bd"/>
</dbReference>
<dbReference type="NCBIfam" id="TIGR02237">
    <property type="entry name" value="recomb_radB"/>
    <property type="match status" value="1"/>
</dbReference>
<dbReference type="PANTHER" id="PTHR22942:SF47">
    <property type="entry name" value="DNA REPAIR AND RECOMBINATION PROTEIN RADB"/>
    <property type="match status" value="1"/>
</dbReference>
<dbReference type="PANTHER" id="PTHR22942">
    <property type="entry name" value="RECA/RAD51/RADA DNA STRAND-PAIRING FAMILY MEMBER"/>
    <property type="match status" value="1"/>
</dbReference>
<dbReference type="Pfam" id="PF08423">
    <property type="entry name" value="Rad51"/>
    <property type="match status" value="1"/>
</dbReference>
<dbReference type="PIRSF" id="PIRSF003336">
    <property type="entry name" value="RadB"/>
    <property type="match status" value="1"/>
</dbReference>
<dbReference type="PRINTS" id="PR01874">
    <property type="entry name" value="DNAREPAIRADA"/>
</dbReference>
<dbReference type="SMART" id="SM00382">
    <property type="entry name" value="AAA"/>
    <property type="match status" value="1"/>
</dbReference>
<dbReference type="SUPFAM" id="SSF52540">
    <property type="entry name" value="P-loop containing nucleoside triphosphate hydrolases"/>
    <property type="match status" value="1"/>
</dbReference>
<dbReference type="PROSITE" id="PS50162">
    <property type="entry name" value="RECA_2"/>
    <property type="match status" value="1"/>
</dbReference>
<protein>
    <recommendedName>
        <fullName>DNA repair and recombination protein RadB</fullName>
    </recommendedName>
</protein>
<reference key="1">
    <citation type="journal article" date="1998" name="DNA Res.">
        <title>Complete sequence and gene organization of the genome of a hyper-thermophilic archaebacterium, Pyrococcus horikoshii OT3.</title>
        <authorList>
            <person name="Kawarabayasi Y."/>
            <person name="Sawada M."/>
            <person name="Horikawa H."/>
            <person name="Haikawa Y."/>
            <person name="Hino Y."/>
            <person name="Yamamoto S."/>
            <person name="Sekine M."/>
            <person name="Baba S."/>
            <person name="Kosugi H."/>
            <person name="Hosoyama A."/>
            <person name="Nagai Y."/>
            <person name="Sakai M."/>
            <person name="Ogura K."/>
            <person name="Otsuka R."/>
            <person name="Nakazawa H."/>
            <person name="Takamiya M."/>
            <person name="Ohfuku Y."/>
            <person name="Funahashi T."/>
            <person name="Tanaka T."/>
            <person name="Kudoh Y."/>
            <person name="Yamazaki J."/>
            <person name="Kushida N."/>
            <person name="Oguchi A."/>
            <person name="Aoki K."/>
            <person name="Yoshizawa T."/>
            <person name="Nakamura Y."/>
            <person name="Robb F.T."/>
            <person name="Horikoshi K."/>
            <person name="Masuchi Y."/>
            <person name="Shizuya H."/>
            <person name="Kikuchi H."/>
        </authorList>
    </citation>
    <scope>NUCLEOTIDE SEQUENCE [LARGE SCALE GENOMIC DNA]</scope>
    <source>
        <strain>ATCC 700860 / DSM 12428 / JCM 9974 / NBRC 100139 / OT-3</strain>
    </source>
</reference>
<evidence type="ECO:0000250" key="1"/>
<evidence type="ECO:0000255" key="2"/>
<evidence type="ECO:0000305" key="3"/>
<accession>O57859</accession>
<name>RADB_PYRHO</name>
<gene>
    <name type="primary">radB</name>
    <name type="ordered locus">PH0119</name>
</gene>